<accession>A2SRE2</accession>
<proteinExistence type="inferred from homology"/>
<feature type="chain" id="PRO_0000331945" description="Methionine--tRNA ligase">
    <location>
        <begin position="1"/>
        <end position="673"/>
    </location>
</feature>
<feature type="domain" description="tRNA-binding" evidence="1">
    <location>
        <begin position="575"/>
        <end position="673"/>
    </location>
</feature>
<feature type="short sequence motif" description="'HIGH' region">
    <location>
        <begin position="13"/>
        <end position="23"/>
    </location>
</feature>
<feature type="short sequence motif" description="'KMSKS' region">
    <location>
        <begin position="325"/>
        <end position="329"/>
    </location>
</feature>
<feature type="binding site" evidence="1">
    <location>
        <position position="144"/>
    </location>
    <ligand>
        <name>Zn(2+)</name>
        <dbReference type="ChEBI" id="CHEBI:29105"/>
    </ligand>
</feature>
<feature type="binding site" evidence="1">
    <location>
        <position position="147"/>
    </location>
    <ligand>
        <name>Zn(2+)</name>
        <dbReference type="ChEBI" id="CHEBI:29105"/>
    </ligand>
</feature>
<feature type="binding site" evidence="1">
    <location>
        <position position="156"/>
    </location>
    <ligand>
        <name>Zn(2+)</name>
        <dbReference type="ChEBI" id="CHEBI:29105"/>
    </ligand>
</feature>
<feature type="binding site" evidence="1">
    <location>
        <position position="160"/>
    </location>
    <ligand>
        <name>Zn(2+)</name>
        <dbReference type="ChEBI" id="CHEBI:29105"/>
    </ligand>
</feature>
<feature type="binding site" evidence="1">
    <location>
        <position position="328"/>
    </location>
    <ligand>
        <name>ATP</name>
        <dbReference type="ChEBI" id="CHEBI:30616"/>
    </ligand>
</feature>
<reference key="1">
    <citation type="journal article" date="2009" name="Stand. Genomic Sci.">
        <title>Complete genome sequence of Methanocorpusculum labreanum type strain Z.</title>
        <authorList>
            <person name="Anderson I.J."/>
            <person name="Sieprawska-Lupa M."/>
            <person name="Goltsman E."/>
            <person name="Lapidus A."/>
            <person name="Copeland A."/>
            <person name="Glavina Del Rio T."/>
            <person name="Tice H."/>
            <person name="Dalin E."/>
            <person name="Barry K."/>
            <person name="Pitluck S."/>
            <person name="Hauser L."/>
            <person name="Land M."/>
            <person name="Lucas S."/>
            <person name="Richardson P."/>
            <person name="Whitman W.B."/>
            <person name="Kyrpides N.C."/>
        </authorList>
    </citation>
    <scope>NUCLEOTIDE SEQUENCE [LARGE SCALE GENOMIC DNA]</scope>
    <source>
        <strain>ATCC 43576 / DSM 4855 / Z</strain>
    </source>
</reference>
<organism>
    <name type="scientific">Methanocorpusculum labreanum (strain ATCC 43576 / DSM 4855 / Z)</name>
    <dbReference type="NCBI Taxonomy" id="410358"/>
    <lineage>
        <taxon>Archaea</taxon>
        <taxon>Methanobacteriati</taxon>
        <taxon>Methanobacteriota</taxon>
        <taxon>Stenosarchaea group</taxon>
        <taxon>Methanomicrobia</taxon>
        <taxon>Methanomicrobiales</taxon>
        <taxon>Methanocorpusculaceae</taxon>
        <taxon>Methanocorpusculum</taxon>
    </lineage>
</organism>
<protein>
    <recommendedName>
        <fullName evidence="1">Methionine--tRNA ligase</fullName>
        <ecNumber evidence="1">6.1.1.10</ecNumber>
    </recommendedName>
    <alternativeName>
        <fullName evidence="1">Methionyl-tRNA synthetase</fullName>
        <shortName evidence="1">MetRS</shortName>
    </alternativeName>
</protein>
<evidence type="ECO:0000255" key="1">
    <source>
        <dbReference type="HAMAP-Rule" id="MF_00098"/>
    </source>
</evidence>
<gene>
    <name evidence="1" type="primary">metG</name>
    <name type="ordered locus">Mlab_0726</name>
</gene>
<dbReference type="EC" id="6.1.1.10" evidence="1"/>
<dbReference type="EMBL" id="CP000559">
    <property type="protein sequence ID" value="ABN06898.1"/>
    <property type="molecule type" value="Genomic_DNA"/>
</dbReference>
<dbReference type="RefSeq" id="WP_011833099.1">
    <property type="nucleotide sequence ID" value="NC_008942.1"/>
</dbReference>
<dbReference type="SMR" id="A2SRE2"/>
<dbReference type="STRING" id="410358.Mlab_0726"/>
<dbReference type="GeneID" id="4795045"/>
<dbReference type="KEGG" id="mla:Mlab_0726"/>
<dbReference type="eggNOG" id="arCOG00810">
    <property type="taxonomic scope" value="Archaea"/>
</dbReference>
<dbReference type="HOGENOM" id="CLU_009710_1_2_2"/>
<dbReference type="OrthoDB" id="371856at2157"/>
<dbReference type="Proteomes" id="UP000000365">
    <property type="component" value="Chromosome"/>
</dbReference>
<dbReference type="GO" id="GO:0017101">
    <property type="term" value="C:aminoacyl-tRNA synthetase multienzyme complex"/>
    <property type="evidence" value="ECO:0007669"/>
    <property type="project" value="TreeGrafter"/>
</dbReference>
<dbReference type="GO" id="GO:0005829">
    <property type="term" value="C:cytosol"/>
    <property type="evidence" value="ECO:0007669"/>
    <property type="project" value="TreeGrafter"/>
</dbReference>
<dbReference type="GO" id="GO:0005524">
    <property type="term" value="F:ATP binding"/>
    <property type="evidence" value="ECO:0007669"/>
    <property type="project" value="UniProtKB-UniRule"/>
</dbReference>
<dbReference type="GO" id="GO:0046872">
    <property type="term" value="F:metal ion binding"/>
    <property type="evidence" value="ECO:0007669"/>
    <property type="project" value="UniProtKB-KW"/>
</dbReference>
<dbReference type="GO" id="GO:0004825">
    <property type="term" value="F:methionine-tRNA ligase activity"/>
    <property type="evidence" value="ECO:0007669"/>
    <property type="project" value="UniProtKB-UniRule"/>
</dbReference>
<dbReference type="GO" id="GO:0000049">
    <property type="term" value="F:tRNA binding"/>
    <property type="evidence" value="ECO:0007669"/>
    <property type="project" value="UniProtKB-KW"/>
</dbReference>
<dbReference type="GO" id="GO:0006431">
    <property type="term" value="P:methionyl-tRNA aminoacylation"/>
    <property type="evidence" value="ECO:0007669"/>
    <property type="project" value="UniProtKB-UniRule"/>
</dbReference>
<dbReference type="CDD" id="cd07957">
    <property type="entry name" value="Anticodon_Ia_Met"/>
    <property type="match status" value="1"/>
</dbReference>
<dbReference type="CDD" id="cd00814">
    <property type="entry name" value="MetRS_core"/>
    <property type="match status" value="1"/>
</dbReference>
<dbReference type="CDD" id="cd02800">
    <property type="entry name" value="tRNA_bind_EcMetRS_like"/>
    <property type="match status" value="1"/>
</dbReference>
<dbReference type="FunFam" id="2.20.28.20:FF:000001">
    <property type="entry name" value="Methionine--tRNA ligase"/>
    <property type="match status" value="1"/>
</dbReference>
<dbReference type="FunFam" id="2.40.50.140:FF:000042">
    <property type="entry name" value="Methionine--tRNA ligase"/>
    <property type="match status" value="1"/>
</dbReference>
<dbReference type="Gene3D" id="3.40.50.620">
    <property type="entry name" value="HUPs"/>
    <property type="match status" value="1"/>
</dbReference>
<dbReference type="Gene3D" id="1.10.730.10">
    <property type="entry name" value="Isoleucyl-tRNA Synthetase, Domain 1"/>
    <property type="match status" value="1"/>
</dbReference>
<dbReference type="Gene3D" id="2.20.28.20">
    <property type="entry name" value="Methionyl-tRNA synthetase, Zn-domain"/>
    <property type="match status" value="1"/>
</dbReference>
<dbReference type="Gene3D" id="2.40.50.140">
    <property type="entry name" value="Nucleic acid-binding proteins"/>
    <property type="match status" value="1"/>
</dbReference>
<dbReference type="HAMAP" id="MF_00098">
    <property type="entry name" value="Met_tRNA_synth_type1"/>
    <property type="match status" value="1"/>
</dbReference>
<dbReference type="InterPro" id="IPR041872">
    <property type="entry name" value="Anticodon_Met"/>
</dbReference>
<dbReference type="InterPro" id="IPR004495">
    <property type="entry name" value="Met-tRNA-synth_bsu_C"/>
</dbReference>
<dbReference type="InterPro" id="IPR023458">
    <property type="entry name" value="Met-tRNA_ligase_1"/>
</dbReference>
<dbReference type="InterPro" id="IPR014758">
    <property type="entry name" value="Met-tRNA_synth"/>
</dbReference>
<dbReference type="InterPro" id="IPR015413">
    <property type="entry name" value="Methionyl/Leucyl_tRNA_Synth"/>
</dbReference>
<dbReference type="InterPro" id="IPR033911">
    <property type="entry name" value="MetRS_core"/>
</dbReference>
<dbReference type="InterPro" id="IPR029038">
    <property type="entry name" value="MetRS_Zn"/>
</dbReference>
<dbReference type="InterPro" id="IPR012340">
    <property type="entry name" value="NA-bd_OB-fold"/>
</dbReference>
<dbReference type="InterPro" id="IPR014729">
    <property type="entry name" value="Rossmann-like_a/b/a_fold"/>
</dbReference>
<dbReference type="InterPro" id="IPR002547">
    <property type="entry name" value="tRNA-bd_dom"/>
</dbReference>
<dbReference type="InterPro" id="IPR009080">
    <property type="entry name" value="tRNAsynth_Ia_anticodon-bd"/>
</dbReference>
<dbReference type="NCBIfam" id="TIGR00398">
    <property type="entry name" value="metG"/>
    <property type="match status" value="1"/>
</dbReference>
<dbReference type="NCBIfam" id="TIGR00399">
    <property type="entry name" value="metG_C_term"/>
    <property type="match status" value="1"/>
</dbReference>
<dbReference type="NCBIfam" id="NF001100">
    <property type="entry name" value="PRK00133.1"/>
    <property type="match status" value="1"/>
</dbReference>
<dbReference type="PANTHER" id="PTHR45765">
    <property type="entry name" value="METHIONINE--TRNA LIGASE"/>
    <property type="match status" value="1"/>
</dbReference>
<dbReference type="PANTHER" id="PTHR45765:SF1">
    <property type="entry name" value="METHIONINE--TRNA LIGASE, CYTOPLASMIC"/>
    <property type="match status" value="1"/>
</dbReference>
<dbReference type="Pfam" id="PF19303">
    <property type="entry name" value="Anticodon_3"/>
    <property type="match status" value="1"/>
</dbReference>
<dbReference type="Pfam" id="PF09334">
    <property type="entry name" value="tRNA-synt_1g"/>
    <property type="match status" value="1"/>
</dbReference>
<dbReference type="Pfam" id="PF01588">
    <property type="entry name" value="tRNA_bind"/>
    <property type="match status" value="1"/>
</dbReference>
<dbReference type="PRINTS" id="PR01041">
    <property type="entry name" value="TRNASYNTHMET"/>
</dbReference>
<dbReference type="SUPFAM" id="SSF47323">
    <property type="entry name" value="Anticodon-binding domain of a subclass of class I aminoacyl-tRNA synthetases"/>
    <property type="match status" value="1"/>
</dbReference>
<dbReference type="SUPFAM" id="SSF57770">
    <property type="entry name" value="Methionyl-tRNA synthetase (MetRS), Zn-domain"/>
    <property type="match status" value="1"/>
</dbReference>
<dbReference type="SUPFAM" id="SSF50249">
    <property type="entry name" value="Nucleic acid-binding proteins"/>
    <property type="match status" value="1"/>
</dbReference>
<dbReference type="SUPFAM" id="SSF52374">
    <property type="entry name" value="Nucleotidylyl transferase"/>
    <property type="match status" value="1"/>
</dbReference>
<dbReference type="PROSITE" id="PS50886">
    <property type="entry name" value="TRBD"/>
    <property type="match status" value="1"/>
</dbReference>
<keyword id="KW-0030">Aminoacyl-tRNA synthetase</keyword>
<keyword id="KW-0067">ATP-binding</keyword>
<keyword id="KW-0963">Cytoplasm</keyword>
<keyword id="KW-0436">Ligase</keyword>
<keyword id="KW-0479">Metal-binding</keyword>
<keyword id="KW-0547">Nucleotide-binding</keyword>
<keyword id="KW-0648">Protein biosynthesis</keyword>
<keyword id="KW-1185">Reference proteome</keyword>
<keyword id="KW-0694">RNA-binding</keyword>
<keyword id="KW-0820">tRNA-binding</keyword>
<keyword id="KW-0862">Zinc</keyword>
<comment type="function">
    <text evidence="1">Is required not only for elongation of protein synthesis but also for the initiation of all mRNA translation through initiator tRNA(fMet) aminoacylation.</text>
</comment>
<comment type="catalytic activity">
    <reaction evidence="1">
        <text>tRNA(Met) + L-methionine + ATP = L-methionyl-tRNA(Met) + AMP + diphosphate</text>
        <dbReference type="Rhea" id="RHEA:13481"/>
        <dbReference type="Rhea" id="RHEA-COMP:9667"/>
        <dbReference type="Rhea" id="RHEA-COMP:9698"/>
        <dbReference type="ChEBI" id="CHEBI:30616"/>
        <dbReference type="ChEBI" id="CHEBI:33019"/>
        <dbReference type="ChEBI" id="CHEBI:57844"/>
        <dbReference type="ChEBI" id="CHEBI:78442"/>
        <dbReference type="ChEBI" id="CHEBI:78530"/>
        <dbReference type="ChEBI" id="CHEBI:456215"/>
        <dbReference type="EC" id="6.1.1.10"/>
    </reaction>
</comment>
<comment type="cofactor">
    <cofactor evidence="1">
        <name>Zn(2+)</name>
        <dbReference type="ChEBI" id="CHEBI:29105"/>
    </cofactor>
    <text evidence="1">Binds 1 zinc ion per subunit.</text>
</comment>
<comment type="subunit">
    <text evidence="1">Homodimer.</text>
</comment>
<comment type="subcellular location">
    <subcellularLocation>
        <location evidence="1">Cytoplasm</location>
    </subcellularLocation>
</comment>
<comment type="similarity">
    <text evidence="1">Belongs to the class-I aminoacyl-tRNA synthetase family. MetG type 1 subfamily.</text>
</comment>
<sequence length="673" mass="75884">MTNKPTVVTCGLPYTNGFCHLGHLRTYIPGDFYVRYLRRLGDDIVFICGSDNHGTPIVVTAEAEKTTPRAVSETYHAHFDNVFKSMGIAFDRFGMTDDPTNHHRTVSILQTLIDRGYVYEQTIQQSYCPKCKRFLPDRYVEGTCPYCGKHARGDECDSGCGRHLEPGEILDPVCATCGTKAELREQKHYYFKLSSFRDYLLEYLPTLGGTLNAKNYAIGWVENELKDWCITRMMDWGVKFPGSDDLVCYVWVDAPIGYISFTEEWAKATNNSWQKYWCEGDRVHFIGSDIIYHHCVFWPAMLHGAGYQPPTAVVASGMVTIDGEKFSKSKGNVVWTKEDYLDKGLPADYLRYYLLAYTSHTRELDFSWKEFQARINNELVNTFGNFANRSMSLVKTKFGDVPQVPVEAEIFAEIERSLAAIEESVRAYEFKAAVDGILLLAAYGNSYISNAAPWKLIKEDPQAAAQILKNCLQIVKACALIMQPVMPESSQKLWEMLGYTDKIESRPISDALVPFENTTLGDVKPLFARIEDKQREEMEAVLTKRAEDSKKKAAGKNTMEAVIEPISEEIITIDDVAKLDLRVGRVVKAERVPKTTKLLRLQVDIGTEVRQIVSGIADVYTPEEMVDKKIIVVVNLKPAKFRGEESNGMLFAAGEEASLLVPLKDVPEGTKVH</sequence>
<name>SYM_METLZ</name>